<dbReference type="EC" id="1.1.1.34"/>
<dbReference type="EMBL" id="AJ248284">
    <property type="protein sequence ID" value="CAB49286.1"/>
    <property type="status" value="ALT_INIT"/>
    <property type="molecule type" value="Genomic_DNA"/>
</dbReference>
<dbReference type="EMBL" id="HE613800">
    <property type="protein sequence ID" value="CCE69741.1"/>
    <property type="molecule type" value="Genomic_DNA"/>
</dbReference>
<dbReference type="PIR" id="G75150">
    <property type="entry name" value="G75150"/>
</dbReference>
<dbReference type="RefSeq" id="WP_048146539.1">
    <property type="nucleotide sequence ID" value="NC_000868.1"/>
</dbReference>
<dbReference type="SMR" id="Q9V1R3"/>
<dbReference type="STRING" id="272844.PAB2106"/>
<dbReference type="KEGG" id="pab:PAB2106"/>
<dbReference type="PATRIC" id="fig|272844.11.peg.385"/>
<dbReference type="eggNOG" id="arCOG04260">
    <property type="taxonomic scope" value="Archaea"/>
</dbReference>
<dbReference type="HOGENOM" id="CLU_001734_2_2_2"/>
<dbReference type="OrthoDB" id="10981at2157"/>
<dbReference type="UniPathway" id="UPA00058">
    <property type="reaction ID" value="UER00103"/>
</dbReference>
<dbReference type="Proteomes" id="UP000000810">
    <property type="component" value="Chromosome"/>
</dbReference>
<dbReference type="Proteomes" id="UP000009139">
    <property type="component" value="Chromosome"/>
</dbReference>
<dbReference type="GO" id="GO:0004420">
    <property type="term" value="F:hydroxymethylglutaryl-CoA reductase (NADPH) activity"/>
    <property type="evidence" value="ECO:0007669"/>
    <property type="project" value="UniProtKB-EC"/>
</dbReference>
<dbReference type="GO" id="GO:0015936">
    <property type="term" value="P:coenzyme A metabolic process"/>
    <property type="evidence" value="ECO:0007669"/>
    <property type="project" value="InterPro"/>
</dbReference>
<dbReference type="GO" id="GO:0008299">
    <property type="term" value="P:isoprenoid biosynthetic process"/>
    <property type="evidence" value="ECO:0007669"/>
    <property type="project" value="UniProtKB-KW"/>
</dbReference>
<dbReference type="GO" id="GO:0016126">
    <property type="term" value="P:sterol biosynthetic process"/>
    <property type="evidence" value="ECO:0007669"/>
    <property type="project" value="TreeGrafter"/>
</dbReference>
<dbReference type="CDD" id="cd00643">
    <property type="entry name" value="HMG-CoA_reductase_classI"/>
    <property type="match status" value="1"/>
</dbReference>
<dbReference type="FunFam" id="3.30.70.420:FF:000001">
    <property type="entry name" value="3-hydroxy-3-methylglutaryl coenzyme A reductase"/>
    <property type="match status" value="1"/>
</dbReference>
<dbReference type="Gene3D" id="3.90.770.10">
    <property type="entry name" value="3-hydroxy-3-methylglutaryl-coenzyme A Reductase, Chain A, domain 2"/>
    <property type="match status" value="1"/>
</dbReference>
<dbReference type="Gene3D" id="1.10.3270.10">
    <property type="entry name" value="HMGR, N-terminal domain"/>
    <property type="match status" value="1"/>
</dbReference>
<dbReference type="Gene3D" id="3.30.70.420">
    <property type="entry name" value="Hydroxymethylglutaryl-CoA reductase, class I/II, NAD/NADP-binding domain"/>
    <property type="match status" value="1"/>
</dbReference>
<dbReference type="InterPro" id="IPR002202">
    <property type="entry name" value="HMG_CoA_Rdtase"/>
</dbReference>
<dbReference type="InterPro" id="IPR023074">
    <property type="entry name" value="HMG_CoA_Rdtase_cat_sf"/>
</dbReference>
<dbReference type="InterPro" id="IPR023076">
    <property type="entry name" value="HMG_CoA_Rdtase_CS"/>
</dbReference>
<dbReference type="InterPro" id="IPR004554">
    <property type="entry name" value="HMG_CoA_Rdtase_eu_arc"/>
</dbReference>
<dbReference type="InterPro" id="IPR023282">
    <property type="entry name" value="HMG_CoA_Rdtase_N"/>
</dbReference>
<dbReference type="InterPro" id="IPR009023">
    <property type="entry name" value="HMG_CoA_Rdtase_NAD(P)-bd_sf"/>
</dbReference>
<dbReference type="InterPro" id="IPR009029">
    <property type="entry name" value="HMG_CoA_Rdtase_sub-bd_dom_sf"/>
</dbReference>
<dbReference type="NCBIfam" id="TIGR00533">
    <property type="entry name" value="HMG_CoA_R_NADP"/>
    <property type="match status" value="1"/>
</dbReference>
<dbReference type="PANTHER" id="PTHR10572">
    <property type="entry name" value="3-HYDROXY-3-METHYLGLUTARYL-COENZYME A REDUCTASE"/>
    <property type="match status" value="1"/>
</dbReference>
<dbReference type="PANTHER" id="PTHR10572:SF24">
    <property type="entry name" value="3-HYDROXY-3-METHYLGLUTARYL-COENZYME A REDUCTASE"/>
    <property type="match status" value="1"/>
</dbReference>
<dbReference type="Pfam" id="PF00368">
    <property type="entry name" value="HMG-CoA_red"/>
    <property type="match status" value="1"/>
</dbReference>
<dbReference type="PRINTS" id="PR00071">
    <property type="entry name" value="HMGCOARDTASE"/>
</dbReference>
<dbReference type="SUPFAM" id="SSF55035">
    <property type="entry name" value="NAD-binding domain of HMG-CoA reductase"/>
    <property type="match status" value="1"/>
</dbReference>
<dbReference type="SUPFAM" id="SSF56542">
    <property type="entry name" value="Substrate-binding domain of HMG-CoA reductase"/>
    <property type="match status" value="1"/>
</dbReference>
<dbReference type="PROSITE" id="PS00066">
    <property type="entry name" value="HMG_COA_REDUCTASE_1"/>
    <property type="match status" value="1"/>
</dbReference>
<dbReference type="PROSITE" id="PS00318">
    <property type="entry name" value="HMG_COA_REDUCTASE_2"/>
    <property type="match status" value="1"/>
</dbReference>
<dbReference type="PROSITE" id="PS50065">
    <property type="entry name" value="HMG_COA_REDUCTASE_4"/>
    <property type="match status" value="1"/>
</dbReference>
<feature type="chain" id="PRO_0000114463" description="3-hydroxy-3-methylglutaryl-coenzyme A reductase">
    <location>
        <begin position="1"/>
        <end position="408"/>
    </location>
</feature>
<feature type="active site" description="Charge relay system" evidence="1">
    <location>
        <position position="101"/>
    </location>
</feature>
<feature type="active site" description="Charge relay system" evidence="1">
    <location>
        <position position="307"/>
    </location>
</feature>
<feature type="active site" description="Proton donor" evidence="1">
    <location>
        <position position="403"/>
    </location>
</feature>
<comment type="function">
    <text evidence="1">Converts HMG-CoA to mevalonate.</text>
</comment>
<comment type="catalytic activity">
    <reaction>
        <text>(R)-mevalonate + 2 NADP(+) + CoA = (3S)-3-hydroxy-3-methylglutaryl-CoA + 2 NADPH + 2 H(+)</text>
        <dbReference type="Rhea" id="RHEA:15989"/>
        <dbReference type="ChEBI" id="CHEBI:15378"/>
        <dbReference type="ChEBI" id="CHEBI:36464"/>
        <dbReference type="ChEBI" id="CHEBI:43074"/>
        <dbReference type="ChEBI" id="CHEBI:57287"/>
        <dbReference type="ChEBI" id="CHEBI:57783"/>
        <dbReference type="ChEBI" id="CHEBI:58349"/>
        <dbReference type="EC" id="1.1.1.34"/>
    </reaction>
</comment>
<comment type="pathway">
    <text>Metabolic intermediate biosynthesis; (R)-mevalonate biosynthesis; (R)-mevalonate from acetyl-CoA: step 3/3.</text>
</comment>
<comment type="similarity">
    <text evidence="2">Belongs to the HMG-CoA reductase family.</text>
</comment>
<comment type="sequence caution" evidence="2">
    <conflict type="erroneous initiation">
        <sequence resource="EMBL-CDS" id="CAB49286"/>
    </conflict>
    <text>Extended N-terminus.</text>
</comment>
<evidence type="ECO:0000250" key="1"/>
<evidence type="ECO:0000305" key="2"/>
<reference key="1">
    <citation type="journal article" date="2003" name="Mol. Microbiol.">
        <title>An integrated analysis of the genome of the hyperthermophilic archaeon Pyrococcus abyssi.</title>
        <authorList>
            <person name="Cohen G.N."/>
            <person name="Barbe V."/>
            <person name="Flament D."/>
            <person name="Galperin M."/>
            <person name="Heilig R."/>
            <person name="Lecompte O."/>
            <person name="Poch O."/>
            <person name="Prieur D."/>
            <person name="Querellou J."/>
            <person name="Ripp R."/>
            <person name="Thierry J.-C."/>
            <person name="Van der Oost J."/>
            <person name="Weissenbach J."/>
            <person name="Zivanovic Y."/>
            <person name="Forterre P."/>
        </authorList>
    </citation>
    <scope>NUCLEOTIDE SEQUENCE [LARGE SCALE GENOMIC DNA]</scope>
    <source>
        <strain>GE5 / Orsay</strain>
    </source>
</reference>
<reference key="2">
    <citation type="journal article" date="2012" name="Curr. Microbiol.">
        <title>Re-annotation of two hyperthermophilic archaea Pyrococcus abyssi GE5 and Pyrococcus furiosus DSM 3638.</title>
        <authorList>
            <person name="Gao J."/>
            <person name="Wang J."/>
        </authorList>
    </citation>
    <scope>GENOME REANNOTATION</scope>
    <source>
        <strain>GE5 / Orsay</strain>
    </source>
</reference>
<accession>Q9V1R3</accession>
<accession>G8ZHZ8</accession>
<proteinExistence type="inferred from homology"/>
<protein>
    <recommendedName>
        <fullName>3-hydroxy-3-methylglutaryl-coenzyme A reductase</fullName>
        <shortName>HMG-CoA reductase</shortName>
        <ecNumber>1.1.1.34</ecNumber>
    </recommendedName>
</protein>
<name>HMDH_PYRAB</name>
<keyword id="KW-0414">Isoprene biosynthesis</keyword>
<keyword id="KW-0521">NADP</keyword>
<keyword id="KW-0560">Oxidoreductase</keyword>
<sequence>MNVEDIIEKVANGEIKLHQVEKYVNGDKRLATEIRRKALERKLGISLKHIGHYSIDPNELIGRNIENMIGVVQIPMGVAGPLKINGEYAKGEFYIPLATTEGALVASVNRGCSALTEAGGVVTTILDDKMTRAPLIRCPNARRAREVAEWVKENLNYLQEKAVAKVTRHGKLRDVKPFIVGNNLYLRFEFETGDAMGMNMVTIASEEIMKVIEEEFPDVRYLALSGNLCVDKKPNAVNFILGRGKTVVAEAIVPREIVEKKLKTTPELIAEVNYFKNLVGSAQAGSYGFNAHFGNIVGAIFLATGQDEAQITEGSHGITIAEVTPEGDLYISITMPSLEIGTVGGGTRVPTQREALSIMGVAGGGDPPGVNAKKFAEIVAGAVLAGELSLLAAIAAKHLARAHKMLGR</sequence>
<organism>
    <name type="scientific">Pyrococcus abyssi (strain GE5 / Orsay)</name>
    <dbReference type="NCBI Taxonomy" id="272844"/>
    <lineage>
        <taxon>Archaea</taxon>
        <taxon>Methanobacteriati</taxon>
        <taxon>Methanobacteriota</taxon>
        <taxon>Thermococci</taxon>
        <taxon>Thermococcales</taxon>
        <taxon>Thermococcaceae</taxon>
        <taxon>Pyrococcus</taxon>
    </lineage>
</organism>
<gene>
    <name type="primary">hmgA</name>
    <name type="ordered locus">PYRAB03640</name>
    <name type="ORF">PAB2106</name>
</gene>